<evidence type="ECO:0000255" key="1">
    <source>
        <dbReference type="HAMAP-Rule" id="MF_01619"/>
    </source>
</evidence>
<feature type="chain" id="PRO_1000069534" description="NAD-dependent malic enzyme">
    <location>
        <begin position="1"/>
        <end position="564"/>
    </location>
</feature>
<feature type="active site" description="Proton donor" evidence="1">
    <location>
        <position position="102"/>
    </location>
</feature>
<feature type="active site" description="Proton acceptor" evidence="1">
    <location>
        <position position="173"/>
    </location>
</feature>
<feature type="binding site" evidence="1">
    <location>
        <position position="155"/>
    </location>
    <ligand>
        <name>NAD(+)</name>
        <dbReference type="ChEBI" id="CHEBI:57540"/>
    </ligand>
</feature>
<feature type="binding site" evidence="1">
    <location>
        <position position="244"/>
    </location>
    <ligand>
        <name>a divalent metal cation</name>
        <dbReference type="ChEBI" id="CHEBI:60240"/>
    </ligand>
</feature>
<feature type="binding site" evidence="1">
    <location>
        <position position="245"/>
    </location>
    <ligand>
        <name>a divalent metal cation</name>
        <dbReference type="ChEBI" id="CHEBI:60240"/>
    </ligand>
</feature>
<feature type="binding site" evidence="1">
    <location>
        <position position="268"/>
    </location>
    <ligand>
        <name>a divalent metal cation</name>
        <dbReference type="ChEBI" id="CHEBI:60240"/>
    </ligand>
</feature>
<feature type="binding site" evidence="1">
    <location>
        <position position="268"/>
    </location>
    <ligand>
        <name>NAD(+)</name>
        <dbReference type="ChEBI" id="CHEBI:57540"/>
    </ligand>
</feature>
<feature type="binding site" evidence="1">
    <location>
        <position position="417"/>
    </location>
    <ligand>
        <name>NAD(+)</name>
        <dbReference type="ChEBI" id="CHEBI:57540"/>
    </ligand>
</feature>
<feature type="site" description="Important for activity" evidence="1">
    <location>
        <position position="268"/>
    </location>
</feature>
<protein>
    <recommendedName>
        <fullName evidence="1">NAD-dependent malic enzyme</fullName>
        <shortName evidence="1">NAD-ME</shortName>
        <ecNumber evidence="1">1.1.1.38</ecNumber>
    </recommendedName>
</protein>
<sequence>MTETAKRPLYVPHAGPSLLEMPLLNKGSAFSTQERIDFNLQGLLPHNIETIEEQTERAYSQYNLCNTDLDRHIFLRSIQDNNETLFFRLLEEHLEEMMPIIYTPTVGQACQEFSKIYRTHRGLFISYPDRERIDDILRSATKNNVKIVVVTDSERILGLGDQGIGGMGIPIGKLSLYTACGGISPAYTLPVVLDVGTNNPDLLNDPMYMGWRHERVSGAQYEEFVDLFIQAIKRRWPNVLLQFEDFAQTNAMPLLERYKDELCCFNDDIQGTAAVAVGTLLAACKAKGEKLSEQTVTFVGAGSAGCGIAEQIIAAMQLEGLDEAQARRRIFMVDRWGLLTDDMSNLLDFQHRLAQKRADLGAWGGQQGDDLALLEVIRNARPTVLIGVSGQRGLFSEEVIRELHSHCKQPLVMPLSNPTSRVEATPQEILNWTDGQALVATGSPFQPVQVGDKRIPIAQCNNAYIFPGIGLGVIAARANRVTEGMLMAAANALANCSPIVTRGEGAVLPALGDIREVSKRIAVAVAKQAQAEGKALHTSDEVLNDAIEANFWFPRYRAYRRTSF</sequence>
<organism>
    <name type="scientific">Pseudomonas aeruginosa (strain UCBPP-PA14)</name>
    <dbReference type="NCBI Taxonomy" id="208963"/>
    <lineage>
        <taxon>Bacteria</taxon>
        <taxon>Pseudomonadati</taxon>
        <taxon>Pseudomonadota</taxon>
        <taxon>Gammaproteobacteria</taxon>
        <taxon>Pseudomonadales</taxon>
        <taxon>Pseudomonadaceae</taxon>
        <taxon>Pseudomonas</taxon>
    </lineage>
</organism>
<reference key="1">
    <citation type="journal article" date="2006" name="Genome Biol.">
        <title>Genomic analysis reveals that Pseudomonas aeruginosa virulence is combinatorial.</title>
        <authorList>
            <person name="Lee D.G."/>
            <person name="Urbach J.M."/>
            <person name="Wu G."/>
            <person name="Liberati N.T."/>
            <person name="Feinbaum R.L."/>
            <person name="Miyata S."/>
            <person name="Diggins L.T."/>
            <person name="He J."/>
            <person name="Saucier M."/>
            <person name="Deziel E."/>
            <person name="Friedman L."/>
            <person name="Li L."/>
            <person name="Grills G."/>
            <person name="Montgomery K."/>
            <person name="Kucherlapati R."/>
            <person name="Rahme L.G."/>
            <person name="Ausubel F.M."/>
        </authorList>
    </citation>
    <scope>NUCLEOTIDE SEQUENCE [LARGE SCALE GENOMIC DNA]</scope>
    <source>
        <strain>UCBPP-PA14</strain>
    </source>
</reference>
<keyword id="KW-0479">Metal-binding</keyword>
<keyword id="KW-0520">NAD</keyword>
<keyword id="KW-0560">Oxidoreductase</keyword>
<comment type="catalytic activity">
    <reaction evidence="1">
        <text>(S)-malate + NAD(+) = pyruvate + CO2 + NADH</text>
        <dbReference type="Rhea" id="RHEA:12653"/>
        <dbReference type="ChEBI" id="CHEBI:15361"/>
        <dbReference type="ChEBI" id="CHEBI:15589"/>
        <dbReference type="ChEBI" id="CHEBI:16526"/>
        <dbReference type="ChEBI" id="CHEBI:57540"/>
        <dbReference type="ChEBI" id="CHEBI:57945"/>
        <dbReference type="EC" id="1.1.1.38"/>
    </reaction>
</comment>
<comment type="catalytic activity">
    <reaction evidence="1">
        <text>oxaloacetate + H(+) = pyruvate + CO2</text>
        <dbReference type="Rhea" id="RHEA:15641"/>
        <dbReference type="ChEBI" id="CHEBI:15361"/>
        <dbReference type="ChEBI" id="CHEBI:15378"/>
        <dbReference type="ChEBI" id="CHEBI:16452"/>
        <dbReference type="ChEBI" id="CHEBI:16526"/>
        <dbReference type="EC" id="1.1.1.38"/>
    </reaction>
</comment>
<comment type="cofactor">
    <cofactor evidence="1">
        <name>Mg(2+)</name>
        <dbReference type="ChEBI" id="CHEBI:18420"/>
    </cofactor>
    <cofactor evidence="1">
        <name>Mn(2+)</name>
        <dbReference type="ChEBI" id="CHEBI:29035"/>
    </cofactor>
    <text evidence="1">Divalent metal cations. Prefers magnesium or manganese.</text>
</comment>
<comment type="subunit">
    <text evidence="1">Homotetramer.</text>
</comment>
<comment type="similarity">
    <text evidence="1">Belongs to the malic enzymes family.</text>
</comment>
<gene>
    <name evidence="1" type="primary">maeA</name>
    <name type="ordered locus">PA14_19190</name>
</gene>
<proteinExistence type="inferred from homology"/>
<dbReference type="EC" id="1.1.1.38" evidence="1"/>
<dbReference type="EMBL" id="CP000438">
    <property type="protein sequence ID" value="ABJ12726.1"/>
    <property type="molecule type" value="Genomic_DNA"/>
</dbReference>
<dbReference type="RefSeq" id="WP_003091987.1">
    <property type="nucleotide sequence ID" value="NZ_CP034244.1"/>
</dbReference>
<dbReference type="SMR" id="Q02QW0"/>
<dbReference type="KEGG" id="pau:PA14_19190"/>
<dbReference type="PseudoCAP" id="PA14_19190"/>
<dbReference type="HOGENOM" id="CLU_011405_5_2_6"/>
<dbReference type="BioCyc" id="PAER208963:G1G74-1582-MONOMER"/>
<dbReference type="Proteomes" id="UP000000653">
    <property type="component" value="Chromosome"/>
</dbReference>
<dbReference type="GO" id="GO:0005829">
    <property type="term" value="C:cytosol"/>
    <property type="evidence" value="ECO:0007669"/>
    <property type="project" value="TreeGrafter"/>
</dbReference>
<dbReference type="GO" id="GO:0004471">
    <property type="term" value="F:malate dehydrogenase (decarboxylating) (NAD+) activity"/>
    <property type="evidence" value="ECO:0007669"/>
    <property type="project" value="UniProtKB-UniRule"/>
</dbReference>
<dbReference type="GO" id="GO:0046872">
    <property type="term" value="F:metal ion binding"/>
    <property type="evidence" value="ECO:0007669"/>
    <property type="project" value="UniProtKB-KW"/>
</dbReference>
<dbReference type="GO" id="GO:0051287">
    <property type="term" value="F:NAD binding"/>
    <property type="evidence" value="ECO:0007669"/>
    <property type="project" value="InterPro"/>
</dbReference>
<dbReference type="GO" id="GO:0008948">
    <property type="term" value="F:oxaloacetate decarboxylase activity"/>
    <property type="evidence" value="ECO:0007669"/>
    <property type="project" value="UniProtKB-UniRule"/>
</dbReference>
<dbReference type="GO" id="GO:0006108">
    <property type="term" value="P:malate metabolic process"/>
    <property type="evidence" value="ECO:0007669"/>
    <property type="project" value="TreeGrafter"/>
</dbReference>
<dbReference type="FunFam" id="3.40.50.10380:FF:000001">
    <property type="entry name" value="NAD-dependent malic enzyme"/>
    <property type="match status" value="1"/>
</dbReference>
<dbReference type="FunFam" id="3.40.50.720:FF:000055">
    <property type="entry name" value="NAD-dependent malic enzyme"/>
    <property type="match status" value="1"/>
</dbReference>
<dbReference type="Gene3D" id="3.40.50.10380">
    <property type="entry name" value="Malic enzyme, N-terminal domain"/>
    <property type="match status" value="1"/>
</dbReference>
<dbReference type="Gene3D" id="3.40.50.720">
    <property type="entry name" value="NAD(P)-binding Rossmann-like Domain"/>
    <property type="match status" value="1"/>
</dbReference>
<dbReference type="HAMAP" id="MF_01619">
    <property type="entry name" value="NAD_malic_enz"/>
    <property type="match status" value="1"/>
</dbReference>
<dbReference type="InterPro" id="IPR046346">
    <property type="entry name" value="Aminoacid_DH-like_N_sf"/>
</dbReference>
<dbReference type="InterPro" id="IPR015884">
    <property type="entry name" value="Malic_enzyme_CS"/>
</dbReference>
<dbReference type="InterPro" id="IPR012301">
    <property type="entry name" value="Malic_N_dom"/>
</dbReference>
<dbReference type="InterPro" id="IPR037062">
    <property type="entry name" value="Malic_N_dom_sf"/>
</dbReference>
<dbReference type="InterPro" id="IPR012302">
    <property type="entry name" value="Malic_NAD-bd"/>
</dbReference>
<dbReference type="InterPro" id="IPR001891">
    <property type="entry name" value="Malic_OxRdtase"/>
</dbReference>
<dbReference type="InterPro" id="IPR036291">
    <property type="entry name" value="NAD(P)-bd_dom_sf"/>
</dbReference>
<dbReference type="InterPro" id="IPR023667">
    <property type="entry name" value="NAD_malic_enz_proteobac"/>
</dbReference>
<dbReference type="NCBIfam" id="NF010052">
    <property type="entry name" value="PRK13529.1"/>
    <property type="match status" value="1"/>
</dbReference>
<dbReference type="PANTHER" id="PTHR23406">
    <property type="entry name" value="MALIC ENZYME-RELATED"/>
    <property type="match status" value="1"/>
</dbReference>
<dbReference type="PANTHER" id="PTHR23406:SF34">
    <property type="entry name" value="NAD-DEPENDENT MALIC ENZYME, MITOCHONDRIAL"/>
    <property type="match status" value="1"/>
</dbReference>
<dbReference type="Pfam" id="PF00390">
    <property type="entry name" value="malic"/>
    <property type="match status" value="1"/>
</dbReference>
<dbReference type="Pfam" id="PF03949">
    <property type="entry name" value="Malic_M"/>
    <property type="match status" value="1"/>
</dbReference>
<dbReference type="PIRSF" id="PIRSF000106">
    <property type="entry name" value="ME"/>
    <property type="match status" value="1"/>
</dbReference>
<dbReference type="PRINTS" id="PR00072">
    <property type="entry name" value="MALOXRDTASE"/>
</dbReference>
<dbReference type="SMART" id="SM01274">
    <property type="entry name" value="malic"/>
    <property type="match status" value="1"/>
</dbReference>
<dbReference type="SMART" id="SM00919">
    <property type="entry name" value="Malic_M"/>
    <property type="match status" value="1"/>
</dbReference>
<dbReference type="SUPFAM" id="SSF53223">
    <property type="entry name" value="Aminoacid dehydrogenase-like, N-terminal domain"/>
    <property type="match status" value="1"/>
</dbReference>
<dbReference type="SUPFAM" id="SSF51735">
    <property type="entry name" value="NAD(P)-binding Rossmann-fold domains"/>
    <property type="match status" value="1"/>
</dbReference>
<dbReference type="PROSITE" id="PS00331">
    <property type="entry name" value="MALIC_ENZYMES"/>
    <property type="match status" value="1"/>
</dbReference>
<accession>Q02QW0</accession>
<name>MAO1_PSEAB</name>